<feature type="chain" id="PRO_1000141242" description="Small ribosomal subunit protein uS13">
    <location>
        <begin position="1"/>
        <end position="122"/>
    </location>
</feature>
<feature type="region of interest" description="Disordered" evidence="2">
    <location>
        <begin position="93"/>
        <end position="122"/>
    </location>
</feature>
<protein>
    <recommendedName>
        <fullName evidence="1">Small ribosomal subunit protein uS13</fullName>
    </recommendedName>
    <alternativeName>
        <fullName evidence="3">30S ribosomal protein S13</fullName>
    </alternativeName>
</protein>
<dbReference type="EMBL" id="CP001078">
    <property type="protein sequence ID" value="ACD52448.1"/>
    <property type="molecule type" value="Genomic_DNA"/>
</dbReference>
<dbReference type="RefSeq" id="WP_003372942.1">
    <property type="nucleotide sequence ID" value="NC_010723.1"/>
</dbReference>
<dbReference type="SMR" id="B2UYD6"/>
<dbReference type="KEGG" id="cbt:CLH_0263"/>
<dbReference type="HOGENOM" id="CLU_103849_1_2_9"/>
<dbReference type="GO" id="GO:0005829">
    <property type="term" value="C:cytosol"/>
    <property type="evidence" value="ECO:0007669"/>
    <property type="project" value="TreeGrafter"/>
</dbReference>
<dbReference type="GO" id="GO:0015935">
    <property type="term" value="C:small ribosomal subunit"/>
    <property type="evidence" value="ECO:0007669"/>
    <property type="project" value="TreeGrafter"/>
</dbReference>
<dbReference type="GO" id="GO:0019843">
    <property type="term" value="F:rRNA binding"/>
    <property type="evidence" value="ECO:0007669"/>
    <property type="project" value="UniProtKB-UniRule"/>
</dbReference>
<dbReference type="GO" id="GO:0003735">
    <property type="term" value="F:structural constituent of ribosome"/>
    <property type="evidence" value="ECO:0007669"/>
    <property type="project" value="InterPro"/>
</dbReference>
<dbReference type="GO" id="GO:0000049">
    <property type="term" value="F:tRNA binding"/>
    <property type="evidence" value="ECO:0007669"/>
    <property type="project" value="UniProtKB-UniRule"/>
</dbReference>
<dbReference type="GO" id="GO:0006412">
    <property type="term" value="P:translation"/>
    <property type="evidence" value="ECO:0007669"/>
    <property type="project" value="UniProtKB-UniRule"/>
</dbReference>
<dbReference type="FunFam" id="1.10.8.50:FF:000001">
    <property type="entry name" value="30S ribosomal protein S13"/>
    <property type="match status" value="1"/>
</dbReference>
<dbReference type="FunFam" id="4.10.910.10:FF:000001">
    <property type="entry name" value="30S ribosomal protein S13"/>
    <property type="match status" value="1"/>
</dbReference>
<dbReference type="Gene3D" id="1.10.8.50">
    <property type="match status" value="1"/>
</dbReference>
<dbReference type="Gene3D" id="4.10.910.10">
    <property type="entry name" value="30s ribosomal protein s13, domain 2"/>
    <property type="match status" value="1"/>
</dbReference>
<dbReference type="HAMAP" id="MF_01315">
    <property type="entry name" value="Ribosomal_uS13"/>
    <property type="match status" value="1"/>
</dbReference>
<dbReference type="InterPro" id="IPR027437">
    <property type="entry name" value="Rbsml_uS13_C"/>
</dbReference>
<dbReference type="InterPro" id="IPR001892">
    <property type="entry name" value="Ribosomal_uS13"/>
</dbReference>
<dbReference type="InterPro" id="IPR010979">
    <property type="entry name" value="Ribosomal_uS13-like_H2TH"/>
</dbReference>
<dbReference type="InterPro" id="IPR019980">
    <property type="entry name" value="Ribosomal_uS13_bac-type"/>
</dbReference>
<dbReference type="InterPro" id="IPR018269">
    <property type="entry name" value="Ribosomal_uS13_CS"/>
</dbReference>
<dbReference type="NCBIfam" id="TIGR03631">
    <property type="entry name" value="uS13_bact"/>
    <property type="match status" value="1"/>
</dbReference>
<dbReference type="PANTHER" id="PTHR10871">
    <property type="entry name" value="30S RIBOSOMAL PROTEIN S13/40S RIBOSOMAL PROTEIN S18"/>
    <property type="match status" value="1"/>
</dbReference>
<dbReference type="PANTHER" id="PTHR10871:SF1">
    <property type="entry name" value="SMALL RIBOSOMAL SUBUNIT PROTEIN US13M"/>
    <property type="match status" value="1"/>
</dbReference>
<dbReference type="Pfam" id="PF00416">
    <property type="entry name" value="Ribosomal_S13"/>
    <property type="match status" value="1"/>
</dbReference>
<dbReference type="PIRSF" id="PIRSF002134">
    <property type="entry name" value="Ribosomal_S13"/>
    <property type="match status" value="1"/>
</dbReference>
<dbReference type="SUPFAM" id="SSF46946">
    <property type="entry name" value="S13-like H2TH domain"/>
    <property type="match status" value="1"/>
</dbReference>
<dbReference type="PROSITE" id="PS00646">
    <property type="entry name" value="RIBOSOMAL_S13_1"/>
    <property type="match status" value="1"/>
</dbReference>
<dbReference type="PROSITE" id="PS50159">
    <property type="entry name" value="RIBOSOMAL_S13_2"/>
    <property type="match status" value="1"/>
</dbReference>
<name>RS13_CLOBA</name>
<keyword id="KW-0687">Ribonucleoprotein</keyword>
<keyword id="KW-0689">Ribosomal protein</keyword>
<keyword id="KW-0694">RNA-binding</keyword>
<keyword id="KW-0699">rRNA-binding</keyword>
<keyword id="KW-0820">tRNA-binding</keyword>
<sequence length="122" mass="13804">MARIAGVDLPREKRVEIALTYIYGIGLSTSQKILSTTGISPDARVKDLSEDEVNEIRTYINKNLMVEGDLRRDVALNIKRLVEIGSYRGIRHRRGLPVRGQKTKTNARTRKGPKKTMANKKK</sequence>
<proteinExistence type="inferred from homology"/>
<reference key="1">
    <citation type="submission" date="2008-05" db="EMBL/GenBank/DDBJ databases">
        <title>Complete genome sequence of Clostridium botulinum E3 str. Alaska E43.</title>
        <authorList>
            <person name="Brinkac L.M."/>
            <person name="Brown J.L."/>
            <person name="Bruce D."/>
            <person name="Detter C."/>
            <person name="Munk C."/>
            <person name="Smith L.A."/>
            <person name="Smith T.J."/>
            <person name="Sutton G."/>
            <person name="Brettin T.S."/>
        </authorList>
    </citation>
    <scope>NUCLEOTIDE SEQUENCE [LARGE SCALE GENOMIC DNA]</scope>
    <source>
        <strain>Alaska E43 / Type E3</strain>
    </source>
</reference>
<gene>
    <name evidence="1" type="primary">rpsM</name>
    <name type="ordered locus">CLH_0263</name>
</gene>
<evidence type="ECO:0000255" key="1">
    <source>
        <dbReference type="HAMAP-Rule" id="MF_01315"/>
    </source>
</evidence>
<evidence type="ECO:0000256" key="2">
    <source>
        <dbReference type="SAM" id="MobiDB-lite"/>
    </source>
</evidence>
<evidence type="ECO:0000305" key="3"/>
<organism>
    <name type="scientific">Clostridium botulinum (strain Alaska E43 / Type E3)</name>
    <dbReference type="NCBI Taxonomy" id="508767"/>
    <lineage>
        <taxon>Bacteria</taxon>
        <taxon>Bacillati</taxon>
        <taxon>Bacillota</taxon>
        <taxon>Clostridia</taxon>
        <taxon>Eubacteriales</taxon>
        <taxon>Clostridiaceae</taxon>
        <taxon>Clostridium</taxon>
    </lineage>
</organism>
<comment type="function">
    <text evidence="1">Located at the top of the head of the 30S subunit, it contacts several helices of the 16S rRNA. In the 70S ribosome it contacts the 23S rRNA (bridge B1a) and protein L5 of the 50S subunit (bridge B1b), connecting the 2 subunits; these bridges are implicated in subunit movement. Contacts the tRNAs in the A and P-sites.</text>
</comment>
<comment type="subunit">
    <text evidence="1">Part of the 30S ribosomal subunit. Forms a loose heterodimer with protein S19. Forms two bridges to the 50S subunit in the 70S ribosome.</text>
</comment>
<comment type="similarity">
    <text evidence="1">Belongs to the universal ribosomal protein uS13 family.</text>
</comment>
<accession>B2UYD6</accession>